<reference key="1">
    <citation type="journal article" date="1992" name="Proc. Natl. Acad. Sci. U.S.A.">
        <title>Molecular characterization and silk gland expression of Bombyx engrailed and invected genes.</title>
        <authorList>
            <person name="Hui C.-C."/>
            <person name="Matsuno K."/>
            <person name="Ueno K."/>
            <person name="Suzuki Y."/>
        </authorList>
    </citation>
    <scope>NUCLEOTIDE SEQUENCE [MRNA]</scope>
    <source>
        <strain>Kinshu X Showa</strain>
        <tissue>Middle silk gland</tissue>
    </source>
</reference>
<comment type="function">
    <text>This protein might be involved in the compartmentalization of the silk gland.</text>
</comment>
<comment type="subcellular location">
    <subcellularLocation>
        <location evidence="1">Nucleus</location>
    </subcellularLocation>
</comment>
<comment type="tissue specificity">
    <text>Expressed in the middle silk gland but not in the posterior silk gland during the fourth molt/fifth intermolt period.</text>
</comment>
<comment type="similarity">
    <text evidence="3">Belongs to the engrailed homeobox family.</text>
</comment>
<evidence type="ECO:0000255" key="1">
    <source>
        <dbReference type="PROSITE-ProRule" id="PRU00108"/>
    </source>
</evidence>
<evidence type="ECO:0000256" key="2">
    <source>
        <dbReference type="SAM" id="MobiDB-lite"/>
    </source>
</evidence>
<evidence type="ECO:0000305" key="3"/>
<protein>
    <recommendedName>
        <fullName>Segmentation polarity homeobox protein engrailed</fullName>
    </recommendedName>
</protein>
<gene>
    <name type="primary">en</name>
</gene>
<dbReference type="EMBL" id="M64335">
    <property type="protein sequence ID" value="AAA62704.1"/>
    <property type="molecule type" value="mRNA"/>
</dbReference>
<dbReference type="PIR" id="A41792">
    <property type="entry name" value="A41792"/>
</dbReference>
<dbReference type="RefSeq" id="NP_001037550.1">
    <property type="nucleotide sequence ID" value="NM_001044085.1"/>
</dbReference>
<dbReference type="SMR" id="P27609"/>
<dbReference type="STRING" id="7091.P27609"/>
<dbReference type="PaxDb" id="7091-BGIBMGA009797-TA"/>
<dbReference type="GeneID" id="101739896"/>
<dbReference type="KEGG" id="bmor:101739896"/>
<dbReference type="eggNOG" id="KOG0493">
    <property type="taxonomic scope" value="Eukaryota"/>
</dbReference>
<dbReference type="HOGENOM" id="CLU_051739_1_0_1"/>
<dbReference type="InParanoid" id="P27609"/>
<dbReference type="Proteomes" id="UP000005204">
    <property type="component" value="Unassembled WGS sequence"/>
</dbReference>
<dbReference type="GO" id="GO:0005634">
    <property type="term" value="C:nucleus"/>
    <property type="evidence" value="ECO:0007669"/>
    <property type="project" value="UniProtKB-SubCell"/>
</dbReference>
<dbReference type="GO" id="GO:0000981">
    <property type="term" value="F:DNA-binding transcription factor activity, RNA polymerase II-specific"/>
    <property type="evidence" value="ECO:0007669"/>
    <property type="project" value="InterPro"/>
</dbReference>
<dbReference type="GO" id="GO:0000978">
    <property type="term" value="F:RNA polymerase II cis-regulatory region sequence-specific DNA binding"/>
    <property type="evidence" value="ECO:0007669"/>
    <property type="project" value="TreeGrafter"/>
</dbReference>
<dbReference type="GO" id="GO:0030182">
    <property type="term" value="P:neuron differentiation"/>
    <property type="evidence" value="ECO:0007669"/>
    <property type="project" value="TreeGrafter"/>
</dbReference>
<dbReference type="GO" id="GO:0007367">
    <property type="term" value="P:segment polarity determination"/>
    <property type="evidence" value="ECO:0007669"/>
    <property type="project" value="UniProtKB-KW"/>
</dbReference>
<dbReference type="CDD" id="cd00086">
    <property type="entry name" value="homeodomain"/>
    <property type="match status" value="1"/>
</dbReference>
<dbReference type="FunFam" id="1.10.10.60:FF:000189">
    <property type="entry name" value="Homeobox protein engrailed-like"/>
    <property type="match status" value="1"/>
</dbReference>
<dbReference type="Gene3D" id="1.10.10.60">
    <property type="entry name" value="Homeodomain-like"/>
    <property type="match status" value="1"/>
</dbReference>
<dbReference type="InterPro" id="IPR050720">
    <property type="entry name" value="Engrailed_Homeobox_TFs"/>
</dbReference>
<dbReference type="InterPro" id="IPR001356">
    <property type="entry name" value="HD"/>
</dbReference>
<dbReference type="InterPro" id="IPR000747">
    <property type="entry name" value="HD_engrailed"/>
</dbReference>
<dbReference type="InterPro" id="IPR020479">
    <property type="entry name" value="HD_metazoa"/>
</dbReference>
<dbReference type="InterPro" id="IPR019549">
    <property type="entry name" value="Homeobox-engrailed_C-terminal"/>
</dbReference>
<dbReference type="InterPro" id="IPR019737">
    <property type="entry name" value="Homeobox-engrailed_CS"/>
</dbReference>
<dbReference type="InterPro" id="IPR017970">
    <property type="entry name" value="Homeobox_CS"/>
</dbReference>
<dbReference type="InterPro" id="IPR009057">
    <property type="entry name" value="Homeodomain-like_sf"/>
</dbReference>
<dbReference type="InterPro" id="IPR000047">
    <property type="entry name" value="HTH_motif"/>
</dbReference>
<dbReference type="PANTHER" id="PTHR24341">
    <property type="entry name" value="HOMEOBOX PROTEIN ENGRAILED"/>
    <property type="match status" value="1"/>
</dbReference>
<dbReference type="PANTHER" id="PTHR24341:SF6">
    <property type="entry name" value="HOMEOBOX PROTEIN INVECTED"/>
    <property type="match status" value="1"/>
</dbReference>
<dbReference type="Pfam" id="PF10525">
    <property type="entry name" value="Engrail_1_C_sig"/>
    <property type="match status" value="1"/>
</dbReference>
<dbReference type="Pfam" id="PF00046">
    <property type="entry name" value="Homeodomain"/>
    <property type="match status" value="1"/>
</dbReference>
<dbReference type="PRINTS" id="PR00026">
    <property type="entry name" value="ENGRAILED"/>
</dbReference>
<dbReference type="PRINTS" id="PR00024">
    <property type="entry name" value="HOMEOBOX"/>
</dbReference>
<dbReference type="PRINTS" id="PR00031">
    <property type="entry name" value="HTHREPRESSR"/>
</dbReference>
<dbReference type="SMART" id="SM00389">
    <property type="entry name" value="HOX"/>
    <property type="match status" value="1"/>
</dbReference>
<dbReference type="SUPFAM" id="SSF46689">
    <property type="entry name" value="Homeodomain-like"/>
    <property type="match status" value="1"/>
</dbReference>
<dbReference type="PROSITE" id="PS00033">
    <property type="entry name" value="ENGRAILED"/>
    <property type="match status" value="1"/>
</dbReference>
<dbReference type="PROSITE" id="PS00027">
    <property type="entry name" value="HOMEOBOX_1"/>
    <property type="match status" value="1"/>
</dbReference>
<dbReference type="PROSITE" id="PS50071">
    <property type="entry name" value="HOMEOBOX_2"/>
    <property type="match status" value="1"/>
</dbReference>
<accession>P27609</accession>
<organism>
    <name type="scientific">Bombyx mori</name>
    <name type="common">Silk moth</name>
    <dbReference type="NCBI Taxonomy" id="7091"/>
    <lineage>
        <taxon>Eukaryota</taxon>
        <taxon>Metazoa</taxon>
        <taxon>Ecdysozoa</taxon>
        <taxon>Arthropoda</taxon>
        <taxon>Hexapoda</taxon>
        <taxon>Insecta</taxon>
        <taxon>Pterygota</taxon>
        <taxon>Neoptera</taxon>
        <taxon>Endopterygota</taxon>
        <taxon>Lepidoptera</taxon>
        <taxon>Glossata</taxon>
        <taxon>Ditrysia</taxon>
        <taxon>Bombycoidea</taxon>
        <taxon>Bombycidae</taxon>
        <taxon>Bombycinae</taxon>
        <taxon>Bombyx</taxon>
    </lineage>
</organism>
<keyword id="KW-0217">Developmental protein</keyword>
<keyword id="KW-0238">DNA-binding</keyword>
<keyword id="KW-0371">Homeobox</keyword>
<keyword id="KW-0539">Nucleus</keyword>
<keyword id="KW-1185">Reference proteome</keyword>
<keyword id="KW-0709">Segmentation polarity protein</keyword>
<proteinExistence type="evidence at transcript level"/>
<feature type="chain" id="PRO_0000196076" description="Segmentation polarity homeobox protein engrailed">
    <location>
        <begin position="1"/>
        <end position="372"/>
    </location>
</feature>
<feature type="DNA-binding region" description="Homeobox" evidence="1">
    <location>
        <begin position="280"/>
        <end position="339"/>
    </location>
</feature>
<feature type="region of interest" description="Disordered" evidence="2">
    <location>
        <begin position="1"/>
        <end position="35"/>
    </location>
</feature>
<feature type="region of interest" description="Disordered" evidence="2">
    <location>
        <begin position="47"/>
        <end position="112"/>
    </location>
</feature>
<feature type="region of interest" description="Disordered" evidence="2">
    <location>
        <begin position="196"/>
        <end position="246"/>
    </location>
</feature>
<feature type="region of interest" description="Disordered" evidence="2">
    <location>
        <begin position="261"/>
        <end position="286"/>
    </location>
</feature>
<feature type="compositionally biased region" description="Basic and acidic residues" evidence="2">
    <location>
        <begin position="79"/>
        <end position="105"/>
    </location>
</feature>
<feature type="compositionally biased region" description="Basic and acidic residues" evidence="2">
    <location>
        <begin position="197"/>
        <end position="215"/>
    </location>
</feature>
<feature type="compositionally biased region" description="Low complexity" evidence="2">
    <location>
        <begin position="216"/>
        <end position="244"/>
    </location>
</feature>
<name>HMEN_BOMMO</name>
<sequence length="372" mass="41554">MAFEDRCSPSQANSPGPVTGRVPAPHAETLAYSPQSQYTCTTIESKYERGSPNMTIVKVQPDSPPPSPGRGQNEMEYQDYYRPETPDVKPHFSREEQRFELDRSRGQRLQPTTPVAFSINNILHPEFGLNAIRKTSKIEGPKPIGPNHSILYKPYDLSKPDLSKYGFDYLKSKETSDCNALPPLGGLRETVSQIGERLSRDREPPKSLEQQKRPDSASSIVSSTSSGAVSTCGSSDASSIQSQSNPGQLWPAWVYCTRYSDRPSSGPRSRRVKKKAAPEEKRPRTAFSGAQLARLKHEFAENRYLTERRRQSLAAELGLAEAQIKIWFQNKRAKIKKASGQRNPLALQLMAQGLYNHSTVTESDDEEEINVT</sequence>